<keyword id="KW-0002">3D-structure</keyword>
<keyword id="KW-0963">Cytoplasm</keyword>
<keyword id="KW-0479">Metal-binding</keyword>
<keyword id="KW-0520">NAD</keyword>
<keyword id="KW-0560">Oxidoreductase</keyword>
<keyword id="KW-1185">Reference proteome</keyword>
<keyword id="KW-0862">Zinc</keyword>
<sequence>MRALAKLAPEEGLTLVDRPVPEPGPGEILVRVEAASICGTDLHIWKWDAWARGRIRPPLVTGHEFSGVVEAVGPGVRRPQVGDHVSLESHIVCHACPACRTGNYHVCLNTQILGVDRDGGFAEYVVVPAENAWVNPKDLPFEVAAILEPFGNAVHTVYAGSGVSGKSVLITGAGPIGLMAAMVVRASGAGPILVSDPNPYRLAFARPYADRLVNPLEEDLLEVVRRVTGSGVEVLLEFSGNEAAIHQGLMALIPGGEARILGIPSDPIRFDLAGELVMRGITAFGIAGRRLWQTWMQGTALVYSGRVDLSPLLTHRLPLSRYREAFGLLASGQAVKVILDPKA</sequence>
<feature type="chain" id="PRO_0000160863" description="L-threonine 3-dehydrogenase">
    <location>
        <begin position="1"/>
        <end position="343"/>
    </location>
</feature>
<feature type="active site" description="Charge relay system" evidence="1">
    <location>
        <position position="40"/>
    </location>
</feature>
<feature type="active site" description="Charge relay system" evidence="1">
    <location>
        <position position="43"/>
    </location>
</feature>
<feature type="binding site" evidence="2 4 5">
    <location>
        <position position="38"/>
    </location>
    <ligand>
        <name>Zn(2+)</name>
        <dbReference type="ChEBI" id="CHEBI:29105"/>
        <label>1</label>
        <note>catalytic</note>
    </ligand>
</feature>
<feature type="binding site" evidence="2 4 5">
    <location>
        <position position="63"/>
    </location>
    <ligand>
        <name>Zn(2+)</name>
        <dbReference type="ChEBI" id="CHEBI:29105"/>
        <label>1</label>
        <note>catalytic</note>
    </ligand>
</feature>
<feature type="binding site" evidence="2 4 5">
    <location>
        <position position="64"/>
    </location>
    <ligand>
        <name>Zn(2+)</name>
        <dbReference type="ChEBI" id="CHEBI:29105"/>
        <label>1</label>
        <note>catalytic</note>
    </ligand>
</feature>
<feature type="binding site" evidence="2 4 5">
    <location>
        <position position="93"/>
    </location>
    <ligand>
        <name>Zn(2+)</name>
        <dbReference type="ChEBI" id="CHEBI:29105"/>
        <label>2</label>
    </ligand>
</feature>
<feature type="binding site" evidence="2 4 5">
    <location>
        <position position="96"/>
    </location>
    <ligand>
        <name>Zn(2+)</name>
        <dbReference type="ChEBI" id="CHEBI:29105"/>
        <label>2</label>
    </ligand>
</feature>
<feature type="binding site" evidence="2 4 5">
    <location>
        <position position="99"/>
    </location>
    <ligand>
        <name>Zn(2+)</name>
        <dbReference type="ChEBI" id="CHEBI:29105"/>
        <label>2</label>
    </ligand>
</feature>
<feature type="binding site" evidence="2 4 5">
    <location>
        <position position="107"/>
    </location>
    <ligand>
        <name>Zn(2+)</name>
        <dbReference type="ChEBI" id="CHEBI:29105"/>
        <label>2</label>
    </ligand>
</feature>
<feature type="binding site" evidence="2">
    <location>
        <position position="176"/>
    </location>
    <ligand>
        <name>NAD(+)</name>
        <dbReference type="ChEBI" id="CHEBI:57540"/>
    </ligand>
</feature>
<feature type="binding site" evidence="2 5">
    <location>
        <position position="196"/>
    </location>
    <ligand>
        <name>NAD(+)</name>
        <dbReference type="ChEBI" id="CHEBI:57540"/>
    </ligand>
</feature>
<feature type="binding site" evidence="2 5">
    <location>
        <position position="201"/>
    </location>
    <ligand>
        <name>NAD(+)</name>
        <dbReference type="ChEBI" id="CHEBI:57540"/>
    </ligand>
</feature>
<feature type="binding site" evidence="2 5">
    <location>
        <begin position="261"/>
        <end position="263"/>
    </location>
    <ligand>
        <name>NAD(+)</name>
        <dbReference type="ChEBI" id="CHEBI:57540"/>
    </ligand>
</feature>
<feature type="binding site" evidence="2 5">
    <location>
        <begin position="286"/>
        <end position="288"/>
    </location>
    <ligand>
        <name>NAD(+)</name>
        <dbReference type="ChEBI" id="CHEBI:57540"/>
    </ligand>
</feature>
<feature type="site" description="Important for catalytic activity for the proton relay mechanism but does not participate directly in the coordination of zinc atom" evidence="1">
    <location>
        <position position="148"/>
    </location>
</feature>
<feature type="strand" evidence="6">
    <location>
        <begin position="2"/>
        <end position="6"/>
    </location>
</feature>
<feature type="strand" evidence="6">
    <location>
        <begin position="8"/>
        <end position="12"/>
    </location>
</feature>
<feature type="strand" evidence="6">
    <location>
        <begin position="14"/>
        <end position="17"/>
    </location>
</feature>
<feature type="strand" evidence="6">
    <location>
        <begin position="27"/>
        <end position="36"/>
    </location>
</feature>
<feature type="helix" evidence="6">
    <location>
        <begin position="39"/>
        <end position="45"/>
    </location>
</feature>
<feature type="helix" evidence="6">
    <location>
        <begin position="49"/>
        <end position="54"/>
    </location>
</feature>
<feature type="strand" evidence="6">
    <location>
        <begin position="57"/>
        <end position="60"/>
    </location>
</feature>
<feature type="strand" evidence="6">
    <location>
        <begin position="64"/>
        <end position="72"/>
    </location>
</feature>
<feature type="strand" evidence="6">
    <location>
        <begin position="84"/>
        <end position="87"/>
    </location>
</feature>
<feature type="strand" evidence="7">
    <location>
        <begin position="94"/>
        <end position="96"/>
    </location>
</feature>
<feature type="helix" evidence="6">
    <location>
        <begin position="97"/>
        <end position="100"/>
    </location>
</feature>
<feature type="helix" evidence="6">
    <location>
        <begin position="104"/>
        <end position="106"/>
    </location>
</feature>
<feature type="turn" evidence="6">
    <location>
        <begin position="113"/>
        <end position="115"/>
    </location>
</feature>
<feature type="strand" evidence="6">
    <location>
        <begin position="120"/>
        <end position="128"/>
    </location>
</feature>
<feature type="helix" evidence="6">
    <location>
        <begin position="129"/>
        <end position="131"/>
    </location>
</feature>
<feature type="strand" evidence="6">
    <location>
        <begin position="132"/>
        <end position="135"/>
    </location>
</feature>
<feature type="helix" evidence="6">
    <location>
        <begin position="141"/>
        <end position="144"/>
    </location>
</feature>
<feature type="helix" evidence="6">
    <location>
        <begin position="147"/>
        <end position="158"/>
    </location>
</feature>
<feature type="strand" evidence="6">
    <location>
        <begin position="168"/>
        <end position="171"/>
    </location>
</feature>
<feature type="helix" evidence="6">
    <location>
        <begin position="175"/>
        <end position="186"/>
    </location>
</feature>
<feature type="strand" evidence="6">
    <location>
        <begin position="191"/>
        <end position="195"/>
    </location>
</feature>
<feature type="helix" evidence="6">
    <location>
        <begin position="199"/>
        <end position="202"/>
    </location>
</feature>
<feature type="helix" evidence="6">
    <location>
        <begin position="203"/>
        <end position="205"/>
    </location>
</feature>
<feature type="turn" evidence="6">
    <location>
        <begin position="206"/>
        <end position="208"/>
    </location>
</feature>
<feature type="strand" evidence="6">
    <location>
        <begin position="210"/>
        <end position="213"/>
    </location>
</feature>
<feature type="turn" evidence="6">
    <location>
        <begin position="215"/>
        <end position="217"/>
    </location>
</feature>
<feature type="helix" evidence="6">
    <location>
        <begin position="220"/>
        <end position="228"/>
    </location>
</feature>
<feature type="strand" evidence="6">
    <location>
        <begin position="232"/>
        <end position="237"/>
    </location>
</feature>
<feature type="helix" evidence="6">
    <location>
        <begin position="242"/>
        <end position="251"/>
    </location>
</feature>
<feature type="strand" evidence="6">
    <location>
        <begin position="252"/>
        <end position="260"/>
    </location>
</feature>
<feature type="strand" evidence="6">
    <location>
        <begin position="268"/>
        <end position="270"/>
    </location>
</feature>
<feature type="helix" evidence="6">
    <location>
        <begin position="272"/>
        <end position="275"/>
    </location>
</feature>
<feature type="helix" evidence="6">
    <location>
        <begin position="277"/>
        <end position="279"/>
    </location>
</feature>
<feature type="strand" evidence="6">
    <location>
        <begin position="282"/>
        <end position="285"/>
    </location>
</feature>
<feature type="helix" evidence="6">
    <location>
        <begin position="293"/>
        <end position="303"/>
    </location>
</feature>
<feature type="helix" evidence="6">
    <location>
        <begin position="310"/>
        <end position="312"/>
    </location>
</feature>
<feature type="strand" evidence="6">
    <location>
        <begin position="313"/>
        <end position="318"/>
    </location>
</feature>
<feature type="helix" evidence="6">
    <location>
        <begin position="319"/>
        <end position="321"/>
    </location>
</feature>
<feature type="helix" evidence="6">
    <location>
        <begin position="322"/>
        <end position="331"/>
    </location>
</feature>
<feature type="strand" evidence="6">
    <location>
        <begin position="335"/>
        <end position="340"/>
    </location>
</feature>
<dbReference type="EC" id="1.1.1.103" evidence="1"/>
<dbReference type="EMBL" id="AP008226">
    <property type="protein sequence ID" value="BAD70392.1"/>
    <property type="molecule type" value="Genomic_DNA"/>
</dbReference>
<dbReference type="RefSeq" id="WP_011228031.1">
    <property type="nucleotide sequence ID" value="NC_006461.1"/>
</dbReference>
<dbReference type="RefSeq" id="YP_143835.1">
    <property type="nucleotide sequence ID" value="NC_006461.1"/>
</dbReference>
<dbReference type="PDB" id="2DQ4">
    <property type="method" value="X-ray"/>
    <property type="resolution" value="2.50 A"/>
    <property type="chains" value="A/B=1-343"/>
</dbReference>
<dbReference type="PDB" id="2EJV">
    <property type="method" value="X-ray"/>
    <property type="resolution" value="2.55 A"/>
    <property type="chains" value="A/B=1-343"/>
</dbReference>
<dbReference type="PDBsum" id="2DQ4"/>
<dbReference type="PDBsum" id="2EJV"/>
<dbReference type="SMR" id="Q5SKS4"/>
<dbReference type="EnsemblBacteria" id="BAD70392">
    <property type="protein sequence ID" value="BAD70392"/>
    <property type="gene ID" value="BAD70392"/>
</dbReference>
<dbReference type="GeneID" id="3169837"/>
<dbReference type="KEGG" id="ttj:TTHA0569"/>
<dbReference type="PATRIC" id="fig|300852.9.peg.568"/>
<dbReference type="eggNOG" id="COG1063">
    <property type="taxonomic scope" value="Bacteria"/>
</dbReference>
<dbReference type="HOGENOM" id="CLU_026673_11_0_0"/>
<dbReference type="PhylomeDB" id="Q5SKS4"/>
<dbReference type="UniPathway" id="UPA00046">
    <property type="reaction ID" value="UER00505"/>
</dbReference>
<dbReference type="EvolutionaryTrace" id="Q5SKS4"/>
<dbReference type="Proteomes" id="UP000000532">
    <property type="component" value="Chromosome"/>
</dbReference>
<dbReference type="GO" id="GO:0005737">
    <property type="term" value="C:cytoplasm"/>
    <property type="evidence" value="ECO:0007669"/>
    <property type="project" value="UniProtKB-SubCell"/>
</dbReference>
<dbReference type="GO" id="GO:0008743">
    <property type="term" value="F:L-threonine 3-dehydrogenase activity"/>
    <property type="evidence" value="ECO:0007669"/>
    <property type="project" value="UniProtKB-UniRule"/>
</dbReference>
<dbReference type="GO" id="GO:0008270">
    <property type="term" value="F:zinc ion binding"/>
    <property type="evidence" value="ECO:0007669"/>
    <property type="project" value="UniProtKB-UniRule"/>
</dbReference>
<dbReference type="GO" id="GO:0019518">
    <property type="term" value="P:L-threonine catabolic process to glycine"/>
    <property type="evidence" value="ECO:0007669"/>
    <property type="project" value="UniProtKB-UniPathway"/>
</dbReference>
<dbReference type="CDD" id="cd05281">
    <property type="entry name" value="TDH"/>
    <property type="match status" value="1"/>
</dbReference>
<dbReference type="Gene3D" id="3.90.180.10">
    <property type="entry name" value="Medium-chain alcohol dehydrogenases, catalytic domain"/>
    <property type="match status" value="1"/>
</dbReference>
<dbReference type="Gene3D" id="3.40.50.720">
    <property type="entry name" value="NAD(P)-binding Rossmann-like Domain"/>
    <property type="match status" value="1"/>
</dbReference>
<dbReference type="HAMAP" id="MF_00627">
    <property type="entry name" value="Thr_dehydrog"/>
    <property type="match status" value="1"/>
</dbReference>
<dbReference type="InterPro" id="IPR013149">
    <property type="entry name" value="ADH-like_C"/>
</dbReference>
<dbReference type="InterPro" id="IPR013154">
    <property type="entry name" value="ADH-like_N"/>
</dbReference>
<dbReference type="InterPro" id="IPR002328">
    <property type="entry name" value="ADH_Zn_CS"/>
</dbReference>
<dbReference type="InterPro" id="IPR011032">
    <property type="entry name" value="GroES-like_sf"/>
</dbReference>
<dbReference type="InterPro" id="IPR004627">
    <property type="entry name" value="L-Threonine_3-DHase"/>
</dbReference>
<dbReference type="InterPro" id="IPR036291">
    <property type="entry name" value="NAD(P)-bd_dom_sf"/>
</dbReference>
<dbReference type="InterPro" id="IPR020843">
    <property type="entry name" value="PKS_ER"/>
</dbReference>
<dbReference type="InterPro" id="IPR050129">
    <property type="entry name" value="Zn_alcohol_dh"/>
</dbReference>
<dbReference type="NCBIfam" id="NF003808">
    <property type="entry name" value="PRK05396.1"/>
    <property type="match status" value="1"/>
</dbReference>
<dbReference type="PANTHER" id="PTHR43401">
    <property type="entry name" value="L-THREONINE 3-DEHYDROGENASE"/>
    <property type="match status" value="1"/>
</dbReference>
<dbReference type="PANTHER" id="PTHR43401:SF2">
    <property type="entry name" value="L-THREONINE 3-DEHYDROGENASE"/>
    <property type="match status" value="1"/>
</dbReference>
<dbReference type="Pfam" id="PF08240">
    <property type="entry name" value="ADH_N"/>
    <property type="match status" value="1"/>
</dbReference>
<dbReference type="Pfam" id="PF00107">
    <property type="entry name" value="ADH_zinc_N"/>
    <property type="match status" value="1"/>
</dbReference>
<dbReference type="SMART" id="SM00829">
    <property type="entry name" value="PKS_ER"/>
    <property type="match status" value="1"/>
</dbReference>
<dbReference type="SUPFAM" id="SSF50129">
    <property type="entry name" value="GroES-like"/>
    <property type="match status" value="1"/>
</dbReference>
<dbReference type="SUPFAM" id="SSF51735">
    <property type="entry name" value="NAD(P)-binding Rossmann-fold domains"/>
    <property type="match status" value="1"/>
</dbReference>
<dbReference type="PROSITE" id="PS00059">
    <property type="entry name" value="ADH_ZINC"/>
    <property type="match status" value="1"/>
</dbReference>
<comment type="function">
    <text evidence="1">Catalyzes the NAD(+)-dependent oxidation of L-threonine to 2-amino-3-ketobutyrate.</text>
</comment>
<comment type="catalytic activity">
    <reaction evidence="1">
        <text>L-threonine + NAD(+) = (2S)-2-amino-3-oxobutanoate + NADH + H(+)</text>
        <dbReference type="Rhea" id="RHEA:13161"/>
        <dbReference type="ChEBI" id="CHEBI:15378"/>
        <dbReference type="ChEBI" id="CHEBI:57540"/>
        <dbReference type="ChEBI" id="CHEBI:57926"/>
        <dbReference type="ChEBI" id="CHEBI:57945"/>
        <dbReference type="ChEBI" id="CHEBI:78948"/>
        <dbReference type="EC" id="1.1.1.103"/>
    </reaction>
</comment>
<comment type="cofactor">
    <cofactor evidence="3">
        <name>Zn(2+)</name>
        <dbReference type="ChEBI" id="CHEBI:29105"/>
    </cofactor>
    <text evidence="1 2">Binds 2 Zn(2+) ions per subunit. Contains one structural ion and one catalytic ion that may be less tightly bound at the site.</text>
</comment>
<comment type="pathway">
    <text evidence="1">Amino-acid degradation; L-threonine degradation via oxydo-reductase pathway; glycine from L-threonine: step 1/2.</text>
</comment>
<comment type="subunit">
    <text evidence="1">Homotetramer.</text>
</comment>
<comment type="subcellular location">
    <subcellularLocation>
        <location evidence="1">Cytoplasm</location>
    </subcellularLocation>
</comment>
<comment type="similarity">
    <text evidence="1">Belongs to the zinc-containing alcohol dehydrogenase family.</text>
</comment>
<proteinExistence type="evidence at protein level"/>
<reference key="1">
    <citation type="submission" date="2004-11" db="EMBL/GenBank/DDBJ databases">
        <title>Complete genome sequence of Thermus thermophilus HB8.</title>
        <authorList>
            <person name="Masui R."/>
            <person name="Kurokawa K."/>
            <person name="Nakagawa N."/>
            <person name="Tokunaga F."/>
            <person name="Koyama Y."/>
            <person name="Shibata T."/>
            <person name="Oshima T."/>
            <person name="Yokoyama S."/>
            <person name="Yasunaga T."/>
            <person name="Kuramitsu S."/>
        </authorList>
    </citation>
    <scope>NUCLEOTIDE SEQUENCE [LARGE SCALE GENOMIC DNA]</scope>
    <source>
        <strain>ATCC 27634 / DSM 579 / HB8</strain>
    </source>
</reference>
<reference key="2">
    <citation type="submission" date="2007-10" db="PDB data bank">
        <title>Crystal structure of threonine 3-dehydrogenase.</title>
        <authorList>
            <consortium name="RIKEN structural genomics initiative (RSGI)"/>
        </authorList>
    </citation>
    <scope>X-RAY CRYSTALLOGRAPHY (2.5 ANGSTROMS) IN COMPLEX WITH NAD AND ZINC</scope>
    <scope>COFACTOR</scope>
</reference>
<organism>
    <name type="scientific">Thermus thermophilus (strain ATCC 27634 / DSM 579 / HB8)</name>
    <dbReference type="NCBI Taxonomy" id="300852"/>
    <lineage>
        <taxon>Bacteria</taxon>
        <taxon>Thermotogati</taxon>
        <taxon>Deinococcota</taxon>
        <taxon>Deinococci</taxon>
        <taxon>Thermales</taxon>
        <taxon>Thermaceae</taxon>
        <taxon>Thermus</taxon>
    </lineage>
</organism>
<gene>
    <name evidence="1" type="primary">tdh</name>
    <name type="ordered locus">TTHA0569</name>
</gene>
<name>TDH_THET8</name>
<accession>Q5SKS4</accession>
<evidence type="ECO:0000255" key="1">
    <source>
        <dbReference type="HAMAP-Rule" id="MF_00627"/>
    </source>
</evidence>
<evidence type="ECO:0000269" key="2">
    <source ref="2"/>
</evidence>
<evidence type="ECO:0000305" key="3">
    <source ref="2"/>
</evidence>
<evidence type="ECO:0007744" key="4">
    <source>
        <dbReference type="PDB" id="2DQ4"/>
    </source>
</evidence>
<evidence type="ECO:0007744" key="5">
    <source>
        <dbReference type="PDB" id="2EJV"/>
    </source>
</evidence>
<evidence type="ECO:0007829" key="6">
    <source>
        <dbReference type="PDB" id="2DQ4"/>
    </source>
</evidence>
<evidence type="ECO:0007829" key="7">
    <source>
        <dbReference type="PDB" id="2EJV"/>
    </source>
</evidence>
<protein>
    <recommendedName>
        <fullName evidence="1">L-threonine 3-dehydrogenase</fullName>
        <shortName evidence="1">TDH</shortName>
        <ecNumber evidence="1">1.1.1.103</ecNumber>
    </recommendedName>
</protein>